<reference key="1">
    <citation type="journal article" date="1998" name="Nature">
        <title>Deciphering the biology of Mycobacterium tuberculosis from the complete genome sequence.</title>
        <authorList>
            <person name="Cole S.T."/>
            <person name="Brosch R."/>
            <person name="Parkhill J."/>
            <person name="Garnier T."/>
            <person name="Churcher C.M."/>
            <person name="Harris D.E."/>
            <person name="Gordon S.V."/>
            <person name="Eiglmeier K."/>
            <person name="Gas S."/>
            <person name="Barry C.E. III"/>
            <person name="Tekaia F."/>
            <person name="Badcock K."/>
            <person name="Basham D."/>
            <person name="Brown D."/>
            <person name="Chillingworth T."/>
            <person name="Connor R."/>
            <person name="Davies R.M."/>
            <person name="Devlin K."/>
            <person name="Feltwell T."/>
            <person name="Gentles S."/>
            <person name="Hamlin N."/>
            <person name="Holroyd S."/>
            <person name="Hornsby T."/>
            <person name="Jagels K."/>
            <person name="Krogh A."/>
            <person name="McLean J."/>
            <person name="Moule S."/>
            <person name="Murphy L.D."/>
            <person name="Oliver S."/>
            <person name="Osborne J."/>
            <person name="Quail M.A."/>
            <person name="Rajandream M.A."/>
            <person name="Rogers J."/>
            <person name="Rutter S."/>
            <person name="Seeger K."/>
            <person name="Skelton S."/>
            <person name="Squares S."/>
            <person name="Squares R."/>
            <person name="Sulston J.E."/>
            <person name="Taylor K."/>
            <person name="Whitehead S."/>
            <person name="Barrell B.G."/>
        </authorList>
    </citation>
    <scope>NUCLEOTIDE SEQUENCE [LARGE SCALE GENOMIC DNA]</scope>
    <source>
        <strain>ATCC 25618 / H37Rv</strain>
    </source>
</reference>
<comment type="similarity">
    <text evidence="1">To E.coli YeaO.</text>
</comment>
<organism>
    <name type="scientific">Mycobacterium tuberculosis (strain ATCC 25618 / H37Rv)</name>
    <dbReference type="NCBI Taxonomy" id="83332"/>
    <lineage>
        <taxon>Bacteria</taxon>
        <taxon>Bacillati</taxon>
        <taxon>Actinomycetota</taxon>
        <taxon>Actinomycetes</taxon>
        <taxon>Mycobacteriales</taxon>
        <taxon>Mycobacteriaceae</taxon>
        <taxon>Mycobacterium</taxon>
        <taxon>Mycobacterium tuberculosis complex</taxon>
    </lineage>
</organism>
<proteinExistence type="predicted"/>
<feature type="chain" id="PRO_0000104112" description="Uncharacterized protein Rv3073c">
    <location>
        <begin position="1"/>
        <end position="118"/>
    </location>
</feature>
<dbReference type="EMBL" id="AL123456">
    <property type="protein sequence ID" value="CCP45882.1"/>
    <property type="molecule type" value="Genomic_DNA"/>
</dbReference>
<dbReference type="PIR" id="B70651">
    <property type="entry name" value="B70651"/>
</dbReference>
<dbReference type="RefSeq" id="NP_217589.1">
    <property type="nucleotide sequence ID" value="NC_000962.3"/>
</dbReference>
<dbReference type="RefSeq" id="WP_003416050.1">
    <property type="nucleotide sequence ID" value="NZ_NVQJ01000011.1"/>
</dbReference>
<dbReference type="STRING" id="83332.Rv3073c"/>
<dbReference type="PaxDb" id="83332-Rv3073c"/>
<dbReference type="DNASU" id="888647"/>
<dbReference type="GeneID" id="888647"/>
<dbReference type="KEGG" id="mtu:Rv3073c"/>
<dbReference type="KEGG" id="mtv:RVBD_3073c"/>
<dbReference type="TubercuList" id="Rv3073c"/>
<dbReference type="eggNOG" id="COG3189">
    <property type="taxonomic scope" value="Bacteria"/>
</dbReference>
<dbReference type="InParanoid" id="P9WL11"/>
<dbReference type="OrthoDB" id="9790745at2"/>
<dbReference type="PhylomeDB" id="P9WL11"/>
<dbReference type="Proteomes" id="UP000001584">
    <property type="component" value="Chromosome"/>
</dbReference>
<dbReference type="InterPro" id="IPR052552">
    <property type="entry name" value="YeaO-like"/>
</dbReference>
<dbReference type="PANTHER" id="PTHR36849:SF1">
    <property type="entry name" value="CYTOPLASMIC PROTEIN"/>
    <property type="match status" value="1"/>
</dbReference>
<dbReference type="PANTHER" id="PTHR36849">
    <property type="entry name" value="CYTOPLASMIC PROTEIN-RELATED"/>
    <property type="match status" value="1"/>
</dbReference>
<dbReference type="Pfam" id="PF22752">
    <property type="entry name" value="DUF488-N3i"/>
    <property type="match status" value="1"/>
</dbReference>
<name>Y3073_MYCTU</name>
<accession>P9WL11</accession>
<accession>L0TBR3</accession>
<accession>P65063</accession>
<accession>P95085</accession>
<evidence type="ECO:0000305" key="1"/>
<gene>
    <name type="ordered locus">Rv3073c</name>
    <name type="ORF">MTCY22D7.08</name>
</gene>
<protein>
    <recommendedName>
        <fullName>Uncharacterized protein Rv3073c</fullName>
    </recommendedName>
</protein>
<sequence length="118" mass="13751">MVRETRVRVARVYEDIDPDDGQRVLVDRIWPHGIRKDDQRVGIWCKDVAPSKELREWYHHQPERFDEFASRYQEELHDSAALAELRKLTGRSVVTPVTATRHVARSHAAVLAQLLNGR</sequence>
<keyword id="KW-1185">Reference proteome</keyword>